<comment type="function">
    <text evidence="1">Catalyzes the transfer of a dimethylallyl group onto the adenine at position 37 in tRNAs that read codons beginning with uridine, leading to the formation of N6-(dimethylallyl)adenosine (i(6)A).</text>
</comment>
<comment type="catalytic activity">
    <reaction evidence="1">
        <text>adenosine(37) in tRNA + dimethylallyl diphosphate = N(6)-dimethylallyladenosine(37) in tRNA + diphosphate</text>
        <dbReference type="Rhea" id="RHEA:26482"/>
        <dbReference type="Rhea" id="RHEA-COMP:10162"/>
        <dbReference type="Rhea" id="RHEA-COMP:10375"/>
        <dbReference type="ChEBI" id="CHEBI:33019"/>
        <dbReference type="ChEBI" id="CHEBI:57623"/>
        <dbReference type="ChEBI" id="CHEBI:74411"/>
        <dbReference type="ChEBI" id="CHEBI:74415"/>
        <dbReference type="EC" id="2.5.1.75"/>
    </reaction>
</comment>
<comment type="cofactor">
    <cofactor evidence="1">
        <name>Mg(2+)</name>
        <dbReference type="ChEBI" id="CHEBI:18420"/>
    </cofactor>
</comment>
<comment type="subunit">
    <text evidence="1">Monomer.</text>
</comment>
<comment type="similarity">
    <text evidence="1">Belongs to the IPP transferase family.</text>
</comment>
<proteinExistence type="inferred from homology"/>
<protein>
    <recommendedName>
        <fullName evidence="1">tRNA dimethylallyltransferase</fullName>
        <ecNumber evidence="1">2.5.1.75</ecNumber>
    </recommendedName>
    <alternativeName>
        <fullName evidence="1">Dimethylallyl diphosphate:tRNA dimethylallyltransferase</fullName>
        <shortName evidence="1">DMAPP:tRNA dimethylallyltransferase</shortName>
        <shortName evidence="1">DMATase</shortName>
    </alternativeName>
    <alternativeName>
        <fullName evidence="1">Isopentenyl-diphosphate:tRNA isopentenyltransferase</fullName>
        <shortName evidence="1">IPP transferase</shortName>
        <shortName evidence="1">IPPT</shortName>
        <shortName evidence="1">IPTase</shortName>
    </alternativeName>
</protein>
<keyword id="KW-0067">ATP-binding</keyword>
<keyword id="KW-0460">Magnesium</keyword>
<keyword id="KW-0547">Nucleotide-binding</keyword>
<keyword id="KW-1185">Reference proteome</keyword>
<keyword id="KW-0808">Transferase</keyword>
<keyword id="KW-0819">tRNA processing</keyword>
<organism>
    <name type="scientific">Caldanaerobacter subterraneus subsp. tengcongensis (strain DSM 15242 / JCM 11007 / NBRC 100824 / MB4)</name>
    <name type="common">Thermoanaerobacter tengcongensis</name>
    <dbReference type="NCBI Taxonomy" id="273068"/>
    <lineage>
        <taxon>Bacteria</taxon>
        <taxon>Bacillati</taxon>
        <taxon>Bacillota</taxon>
        <taxon>Clostridia</taxon>
        <taxon>Thermoanaerobacterales</taxon>
        <taxon>Thermoanaerobacteraceae</taxon>
        <taxon>Caldanaerobacter</taxon>
    </lineage>
</organism>
<evidence type="ECO:0000255" key="1">
    <source>
        <dbReference type="HAMAP-Rule" id="MF_00185"/>
    </source>
</evidence>
<gene>
    <name evidence="1" type="primary">miaA</name>
    <name type="ordered locus">TTE1359</name>
</gene>
<feature type="chain" id="PRO_0000163999" description="tRNA dimethylallyltransferase">
    <location>
        <begin position="1"/>
        <end position="315"/>
    </location>
</feature>
<feature type="region of interest" description="Interaction with substrate tRNA" evidence="1">
    <location>
        <begin position="35"/>
        <end position="38"/>
    </location>
</feature>
<feature type="binding site" evidence="1">
    <location>
        <begin position="10"/>
        <end position="17"/>
    </location>
    <ligand>
        <name>ATP</name>
        <dbReference type="ChEBI" id="CHEBI:30616"/>
    </ligand>
</feature>
<feature type="binding site" evidence="1">
    <location>
        <begin position="12"/>
        <end position="17"/>
    </location>
    <ligand>
        <name>substrate</name>
    </ligand>
</feature>
<feature type="site" description="Interaction with substrate tRNA" evidence="1">
    <location>
        <position position="101"/>
    </location>
</feature>
<feature type="site" description="Interaction with substrate tRNA" evidence="1">
    <location>
        <position position="124"/>
    </location>
</feature>
<dbReference type="EC" id="2.5.1.75" evidence="1"/>
<dbReference type="EMBL" id="AE008691">
    <property type="protein sequence ID" value="AAM24581.1"/>
    <property type="molecule type" value="Genomic_DNA"/>
</dbReference>
<dbReference type="RefSeq" id="WP_009610803.1">
    <property type="nucleotide sequence ID" value="NC_003869.1"/>
</dbReference>
<dbReference type="SMR" id="Q8R5S5"/>
<dbReference type="STRING" id="273068.TTE1359"/>
<dbReference type="KEGG" id="tte:TTE1359"/>
<dbReference type="eggNOG" id="COG0324">
    <property type="taxonomic scope" value="Bacteria"/>
</dbReference>
<dbReference type="HOGENOM" id="CLU_032616_0_1_9"/>
<dbReference type="OrthoDB" id="9776390at2"/>
<dbReference type="Proteomes" id="UP000000555">
    <property type="component" value="Chromosome"/>
</dbReference>
<dbReference type="GO" id="GO:0005524">
    <property type="term" value="F:ATP binding"/>
    <property type="evidence" value="ECO:0007669"/>
    <property type="project" value="UniProtKB-UniRule"/>
</dbReference>
<dbReference type="GO" id="GO:0052381">
    <property type="term" value="F:tRNA dimethylallyltransferase activity"/>
    <property type="evidence" value="ECO:0007669"/>
    <property type="project" value="UniProtKB-UniRule"/>
</dbReference>
<dbReference type="GO" id="GO:0006400">
    <property type="term" value="P:tRNA modification"/>
    <property type="evidence" value="ECO:0007669"/>
    <property type="project" value="TreeGrafter"/>
</dbReference>
<dbReference type="FunFam" id="1.10.20.140:FF:000001">
    <property type="entry name" value="tRNA dimethylallyltransferase"/>
    <property type="match status" value="1"/>
</dbReference>
<dbReference type="Gene3D" id="1.10.20.140">
    <property type="match status" value="1"/>
</dbReference>
<dbReference type="Gene3D" id="3.40.50.300">
    <property type="entry name" value="P-loop containing nucleotide triphosphate hydrolases"/>
    <property type="match status" value="1"/>
</dbReference>
<dbReference type="HAMAP" id="MF_00185">
    <property type="entry name" value="IPP_trans"/>
    <property type="match status" value="1"/>
</dbReference>
<dbReference type="InterPro" id="IPR039657">
    <property type="entry name" value="Dimethylallyltransferase"/>
</dbReference>
<dbReference type="InterPro" id="IPR018022">
    <property type="entry name" value="IPT"/>
</dbReference>
<dbReference type="InterPro" id="IPR027417">
    <property type="entry name" value="P-loop_NTPase"/>
</dbReference>
<dbReference type="NCBIfam" id="TIGR00174">
    <property type="entry name" value="miaA"/>
    <property type="match status" value="1"/>
</dbReference>
<dbReference type="PANTHER" id="PTHR11088">
    <property type="entry name" value="TRNA DIMETHYLALLYLTRANSFERASE"/>
    <property type="match status" value="1"/>
</dbReference>
<dbReference type="PANTHER" id="PTHR11088:SF60">
    <property type="entry name" value="TRNA DIMETHYLALLYLTRANSFERASE"/>
    <property type="match status" value="1"/>
</dbReference>
<dbReference type="Pfam" id="PF01715">
    <property type="entry name" value="IPPT"/>
    <property type="match status" value="1"/>
</dbReference>
<dbReference type="SUPFAM" id="SSF52540">
    <property type="entry name" value="P-loop containing nucleoside triphosphate hydrolases"/>
    <property type="match status" value="2"/>
</dbReference>
<name>MIAA_CALS4</name>
<reference key="1">
    <citation type="journal article" date="2002" name="Genome Res.">
        <title>A complete sequence of the T. tengcongensis genome.</title>
        <authorList>
            <person name="Bao Q."/>
            <person name="Tian Y."/>
            <person name="Li W."/>
            <person name="Xu Z."/>
            <person name="Xuan Z."/>
            <person name="Hu S."/>
            <person name="Dong W."/>
            <person name="Yang J."/>
            <person name="Chen Y."/>
            <person name="Xue Y."/>
            <person name="Xu Y."/>
            <person name="Lai X."/>
            <person name="Huang L."/>
            <person name="Dong X."/>
            <person name="Ma Y."/>
            <person name="Ling L."/>
            <person name="Tan H."/>
            <person name="Chen R."/>
            <person name="Wang J."/>
            <person name="Yu J."/>
            <person name="Yang H."/>
        </authorList>
    </citation>
    <scope>NUCLEOTIDE SEQUENCE [LARGE SCALE GENOMIC DNA]</scope>
    <source>
        <strain>DSM 15242 / JCM 11007 / NBRC 100824 / MB4</strain>
    </source>
</reference>
<sequence length="315" mass="36842">MAIQIVLIVGPTATGKSRLAVDVAKRFNGEVVSADSMQIYKYMDIGTAKITKEEMQGIPHHMIDIVEPNEEFSVAEYEKRAKAIIKDIHERGKLPIIVGGTGLYINSIVYIMHFSDFEGSKEFREKMKKLAETYGTSYLYEKLKEVDPEAARKIHPNDLRRIIRALEVYEFTGKPISHYQKMSGMRKNPEYDPIMIGLNYKNRQLLYEKINRRVDEMIKNNLVEEVVNLLKIGYNKYGTSMQALGYKEIVEYLNGEISLEEAVEKIKKGTRRYAKRQITWFKAYDFIKWFFVDDYKTYEELRENIFEYLAGKLKF</sequence>
<accession>Q8R5S5</accession>